<keyword id="KW-0963">Cytoplasm</keyword>
<keyword id="KW-0489">Methyltransferase</keyword>
<keyword id="KW-0545">Nucleotide biosynthesis</keyword>
<keyword id="KW-1185">Reference proteome</keyword>
<keyword id="KW-0808">Transferase</keyword>
<dbReference type="EC" id="2.1.1.45" evidence="1"/>
<dbReference type="EMBL" id="CP000758">
    <property type="protein sequence ID" value="ABS14508.1"/>
    <property type="molecule type" value="Genomic_DNA"/>
</dbReference>
<dbReference type="RefSeq" id="WP_012091790.1">
    <property type="nucleotide sequence ID" value="NC_009667.1"/>
</dbReference>
<dbReference type="SMR" id="A6WZV4"/>
<dbReference type="STRING" id="439375.Oant_1792"/>
<dbReference type="KEGG" id="oan:Oant_1792"/>
<dbReference type="PATRIC" id="fig|439375.7.peg.1893"/>
<dbReference type="eggNOG" id="COG0207">
    <property type="taxonomic scope" value="Bacteria"/>
</dbReference>
<dbReference type="HOGENOM" id="CLU_021669_0_0_5"/>
<dbReference type="PhylomeDB" id="A6WZV4"/>
<dbReference type="UniPathway" id="UPA00575"/>
<dbReference type="Proteomes" id="UP000002301">
    <property type="component" value="Chromosome 1"/>
</dbReference>
<dbReference type="GO" id="GO:0005829">
    <property type="term" value="C:cytosol"/>
    <property type="evidence" value="ECO:0007669"/>
    <property type="project" value="TreeGrafter"/>
</dbReference>
<dbReference type="GO" id="GO:0004799">
    <property type="term" value="F:thymidylate synthase activity"/>
    <property type="evidence" value="ECO:0007669"/>
    <property type="project" value="UniProtKB-UniRule"/>
</dbReference>
<dbReference type="GO" id="GO:0006231">
    <property type="term" value="P:dTMP biosynthetic process"/>
    <property type="evidence" value="ECO:0007669"/>
    <property type="project" value="UniProtKB-UniRule"/>
</dbReference>
<dbReference type="GO" id="GO:0006235">
    <property type="term" value="P:dTTP biosynthetic process"/>
    <property type="evidence" value="ECO:0007669"/>
    <property type="project" value="UniProtKB-UniRule"/>
</dbReference>
<dbReference type="GO" id="GO:0032259">
    <property type="term" value="P:methylation"/>
    <property type="evidence" value="ECO:0007669"/>
    <property type="project" value="UniProtKB-KW"/>
</dbReference>
<dbReference type="CDD" id="cd00351">
    <property type="entry name" value="TS_Pyrimidine_HMase"/>
    <property type="match status" value="1"/>
</dbReference>
<dbReference type="FunFam" id="3.30.572.10:FF:000001">
    <property type="entry name" value="Thymidylate synthase"/>
    <property type="match status" value="1"/>
</dbReference>
<dbReference type="Gene3D" id="3.30.572.10">
    <property type="entry name" value="Thymidylate synthase/dCMP hydroxymethylase domain"/>
    <property type="match status" value="1"/>
</dbReference>
<dbReference type="HAMAP" id="MF_00008">
    <property type="entry name" value="Thymidy_synth_bact"/>
    <property type="match status" value="1"/>
</dbReference>
<dbReference type="InterPro" id="IPR045097">
    <property type="entry name" value="Thymidate_synth/dCMP_Mease"/>
</dbReference>
<dbReference type="InterPro" id="IPR023451">
    <property type="entry name" value="Thymidate_synth/dCMP_Mease_dom"/>
</dbReference>
<dbReference type="InterPro" id="IPR036926">
    <property type="entry name" value="Thymidate_synth/dCMP_Mease_sf"/>
</dbReference>
<dbReference type="InterPro" id="IPR000398">
    <property type="entry name" value="Thymidylate_synthase"/>
</dbReference>
<dbReference type="InterPro" id="IPR020940">
    <property type="entry name" value="Thymidylate_synthase_AS"/>
</dbReference>
<dbReference type="NCBIfam" id="NF002497">
    <property type="entry name" value="PRK01827.1-3"/>
    <property type="match status" value="1"/>
</dbReference>
<dbReference type="NCBIfam" id="NF002499">
    <property type="entry name" value="PRK01827.1-5"/>
    <property type="match status" value="1"/>
</dbReference>
<dbReference type="NCBIfam" id="TIGR03284">
    <property type="entry name" value="thym_sym"/>
    <property type="match status" value="2"/>
</dbReference>
<dbReference type="PANTHER" id="PTHR11548:SF9">
    <property type="entry name" value="THYMIDYLATE SYNTHASE"/>
    <property type="match status" value="1"/>
</dbReference>
<dbReference type="PANTHER" id="PTHR11548">
    <property type="entry name" value="THYMIDYLATE SYNTHASE 1"/>
    <property type="match status" value="1"/>
</dbReference>
<dbReference type="Pfam" id="PF00303">
    <property type="entry name" value="Thymidylat_synt"/>
    <property type="match status" value="1"/>
</dbReference>
<dbReference type="PRINTS" id="PR00108">
    <property type="entry name" value="THYMDSNTHASE"/>
</dbReference>
<dbReference type="SUPFAM" id="SSF55831">
    <property type="entry name" value="Thymidylate synthase/dCMP hydroxymethylase"/>
    <property type="match status" value="1"/>
</dbReference>
<dbReference type="PROSITE" id="PS00091">
    <property type="entry name" value="THYMIDYLATE_SYNTHASE"/>
    <property type="match status" value="1"/>
</dbReference>
<feature type="chain" id="PRO_1000000644" description="Thymidylate synthase">
    <location>
        <begin position="1"/>
        <end position="264"/>
    </location>
</feature>
<feature type="active site" description="Nucleophile" evidence="1">
    <location>
        <position position="146"/>
    </location>
</feature>
<feature type="binding site" description="in other chain" evidence="1">
    <location>
        <position position="21"/>
    </location>
    <ligand>
        <name>dUMP</name>
        <dbReference type="ChEBI" id="CHEBI:246422"/>
        <note>ligand shared between dimeric partners</note>
    </ligand>
</feature>
<feature type="binding site" evidence="1">
    <location>
        <position position="51"/>
    </location>
    <ligand>
        <name>(6R)-5,10-methylene-5,6,7,8-tetrahydrofolate</name>
        <dbReference type="ChEBI" id="CHEBI:15636"/>
    </ligand>
</feature>
<feature type="binding site" evidence="1">
    <location>
        <begin position="126"/>
        <end position="127"/>
    </location>
    <ligand>
        <name>dUMP</name>
        <dbReference type="ChEBI" id="CHEBI:246422"/>
        <note>ligand shared between dimeric partners</note>
    </ligand>
</feature>
<feature type="binding site" description="in other chain" evidence="1">
    <location>
        <begin position="166"/>
        <end position="169"/>
    </location>
    <ligand>
        <name>dUMP</name>
        <dbReference type="ChEBI" id="CHEBI:246422"/>
        <note>ligand shared between dimeric partners</note>
    </ligand>
</feature>
<feature type="binding site" evidence="1">
    <location>
        <position position="169"/>
    </location>
    <ligand>
        <name>(6R)-5,10-methylene-5,6,7,8-tetrahydrofolate</name>
        <dbReference type="ChEBI" id="CHEBI:15636"/>
    </ligand>
</feature>
<feature type="binding site" description="in other chain" evidence="1">
    <location>
        <position position="177"/>
    </location>
    <ligand>
        <name>dUMP</name>
        <dbReference type="ChEBI" id="CHEBI:246422"/>
        <note>ligand shared between dimeric partners</note>
    </ligand>
</feature>
<feature type="binding site" description="in other chain" evidence="1">
    <location>
        <begin position="207"/>
        <end position="209"/>
    </location>
    <ligand>
        <name>dUMP</name>
        <dbReference type="ChEBI" id="CHEBI:246422"/>
        <note>ligand shared between dimeric partners</note>
    </ligand>
</feature>
<feature type="binding site" evidence="1">
    <location>
        <position position="263"/>
    </location>
    <ligand>
        <name>(6R)-5,10-methylene-5,6,7,8-tetrahydrofolate</name>
        <dbReference type="ChEBI" id="CHEBI:15636"/>
    </ligand>
</feature>
<protein>
    <recommendedName>
        <fullName evidence="1">Thymidylate synthase</fullName>
        <shortName evidence="1">TS</shortName>
        <shortName evidence="1">TSase</shortName>
        <ecNumber evidence="1">2.1.1.45</ecNumber>
    </recommendedName>
</protein>
<comment type="function">
    <text evidence="1">Catalyzes the reductive methylation of 2'-deoxyuridine-5'-monophosphate (dUMP) to 2'-deoxythymidine-5'-monophosphate (dTMP) while utilizing 5,10-methylenetetrahydrofolate (mTHF) as the methyl donor and reductant in the reaction, yielding dihydrofolate (DHF) as a by-product. This enzymatic reaction provides an intracellular de novo source of dTMP, an essential precursor for DNA biosynthesis.</text>
</comment>
<comment type="catalytic activity">
    <reaction evidence="1">
        <text>dUMP + (6R)-5,10-methylene-5,6,7,8-tetrahydrofolate = 7,8-dihydrofolate + dTMP</text>
        <dbReference type="Rhea" id="RHEA:12104"/>
        <dbReference type="ChEBI" id="CHEBI:15636"/>
        <dbReference type="ChEBI" id="CHEBI:57451"/>
        <dbReference type="ChEBI" id="CHEBI:63528"/>
        <dbReference type="ChEBI" id="CHEBI:246422"/>
        <dbReference type="EC" id="2.1.1.45"/>
    </reaction>
</comment>
<comment type="pathway">
    <text evidence="1">Pyrimidine metabolism; dTTP biosynthesis.</text>
</comment>
<comment type="subunit">
    <text evidence="1">Homodimer.</text>
</comment>
<comment type="subcellular location">
    <subcellularLocation>
        <location evidence="1">Cytoplasm</location>
    </subcellularLocation>
</comment>
<comment type="similarity">
    <text evidence="1">Belongs to the thymidylate synthase family. Bacterial-type ThyA subfamily.</text>
</comment>
<name>TYSY_BRUA4</name>
<organism>
    <name type="scientific">Brucella anthropi (strain ATCC 49188 / DSM 6882 / CCUG 24695 / JCM 21032 / LMG 3331 / NBRC 15819 / NCTC 12168 / Alc 37)</name>
    <name type="common">Ochrobactrum anthropi</name>
    <dbReference type="NCBI Taxonomy" id="439375"/>
    <lineage>
        <taxon>Bacteria</taxon>
        <taxon>Pseudomonadati</taxon>
        <taxon>Pseudomonadota</taxon>
        <taxon>Alphaproteobacteria</taxon>
        <taxon>Hyphomicrobiales</taxon>
        <taxon>Brucellaceae</taxon>
        <taxon>Brucella/Ochrobactrum group</taxon>
        <taxon>Brucella</taxon>
    </lineage>
</organism>
<gene>
    <name evidence="1" type="primary">thyA</name>
    <name type="ordered locus">Oant_1792</name>
</gene>
<evidence type="ECO:0000255" key="1">
    <source>
        <dbReference type="HAMAP-Rule" id="MF_00008"/>
    </source>
</evidence>
<accession>A6WZV4</accession>
<sequence length="264" mass="30139">MRTYLDLLQHVLDNGTDRGDRTGTGTRSVFGYQMRFNLEEGFPVLTTKKLHLRSIIHELLWFLKGDTNIAYLKENGVSIWDEWADKNGDLGPVYGYQWRSWPAPDGRHIDQIANLLKMLHGNPNSRRLIVSAWNPALVDEMALPPCHCLFQFYVADGKLSCQLYQRSADIFLGVPFNIASYALLTMMIAQVAGLKPGEFIHTLGDAHIYANHFDQARLQLTRIPKKLPTMWINPDVKDLFAFRFEDFQLEGYEADPTIKAPIAV</sequence>
<proteinExistence type="inferred from homology"/>
<reference key="1">
    <citation type="journal article" date="2011" name="J. Bacteriol.">
        <title>Genome of Ochrobactrum anthropi ATCC 49188 T, a versatile opportunistic pathogen and symbiont of several eukaryotic hosts.</title>
        <authorList>
            <person name="Chain P.S."/>
            <person name="Lang D.M."/>
            <person name="Comerci D.J."/>
            <person name="Malfatti S.A."/>
            <person name="Vergez L.M."/>
            <person name="Shin M."/>
            <person name="Ugalde R.A."/>
            <person name="Garcia E."/>
            <person name="Tolmasky M.E."/>
        </authorList>
    </citation>
    <scope>NUCLEOTIDE SEQUENCE [LARGE SCALE GENOMIC DNA]</scope>
    <source>
        <strain>ATCC 49188 / DSM 6882 / CCUG 24695 / JCM 21032 / LMG 3331 / NBRC 15819 / NCTC 12168 / Alc 37</strain>
    </source>
</reference>